<accession>A0PXS4</accession>
<sequence>MSKNCAIVVAAGKGTRMNTDINKQFINLKGNPILYYTLKKFQDNTSIDNIVLVLSKDEIGYCVENVLKKYHLDKVTHIVEGGKTRQESVISGLNAVKDSEIVLIHDGARPFIEDRIIEDGIKYAKLYGASACGVKVKDTIKVIAEDGFSKDTLKREELFSVQTPQCFKYDLILNCHKKALKDNIEVTDDTSVVESYGHRVYLYEGSYNNIKITTPEDLPMGESILENIKTC</sequence>
<comment type="function">
    <text evidence="1">Catalyzes the formation of 4-diphosphocytidyl-2-C-methyl-D-erythritol from CTP and 2-C-methyl-D-erythritol 4-phosphate (MEP).</text>
</comment>
<comment type="catalytic activity">
    <reaction evidence="1">
        <text>2-C-methyl-D-erythritol 4-phosphate + CTP + H(+) = 4-CDP-2-C-methyl-D-erythritol + diphosphate</text>
        <dbReference type="Rhea" id="RHEA:13429"/>
        <dbReference type="ChEBI" id="CHEBI:15378"/>
        <dbReference type="ChEBI" id="CHEBI:33019"/>
        <dbReference type="ChEBI" id="CHEBI:37563"/>
        <dbReference type="ChEBI" id="CHEBI:57823"/>
        <dbReference type="ChEBI" id="CHEBI:58262"/>
        <dbReference type="EC" id="2.7.7.60"/>
    </reaction>
</comment>
<comment type="pathway">
    <text evidence="1">Isoprenoid biosynthesis; isopentenyl diphosphate biosynthesis via DXP pathway; isopentenyl diphosphate from 1-deoxy-D-xylulose 5-phosphate: step 2/6.</text>
</comment>
<comment type="similarity">
    <text evidence="1">Belongs to the IspD/TarI cytidylyltransferase family. IspD subfamily.</text>
</comment>
<reference key="1">
    <citation type="journal article" date="2006" name="Nat. Biotechnol.">
        <title>The genome and transcriptomes of the anti-tumor agent Clostridium novyi-NT.</title>
        <authorList>
            <person name="Bettegowda C."/>
            <person name="Huang X."/>
            <person name="Lin J."/>
            <person name="Cheong I."/>
            <person name="Kohli M."/>
            <person name="Szabo S.A."/>
            <person name="Zhang X."/>
            <person name="Diaz L.A. Jr."/>
            <person name="Velculescu V.E."/>
            <person name="Parmigiani G."/>
            <person name="Kinzler K.W."/>
            <person name="Vogelstein B."/>
            <person name="Zhou S."/>
        </authorList>
    </citation>
    <scope>NUCLEOTIDE SEQUENCE [LARGE SCALE GENOMIC DNA]</scope>
    <source>
        <strain>NT</strain>
    </source>
</reference>
<feature type="chain" id="PRO_1000022917" description="2-C-methyl-D-erythritol 4-phosphate cytidylyltransferase">
    <location>
        <begin position="1"/>
        <end position="231"/>
    </location>
</feature>
<feature type="site" description="Transition state stabilizer" evidence="1">
    <location>
        <position position="16"/>
    </location>
</feature>
<feature type="site" description="Transition state stabilizer" evidence="1">
    <location>
        <position position="23"/>
    </location>
</feature>
<feature type="site" description="Positions MEP for the nucleophilic attack" evidence="1">
    <location>
        <position position="155"/>
    </location>
</feature>
<feature type="site" description="Positions MEP for the nucleophilic attack" evidence="1">
    <location>
        <position position="211"/>
    </location>
</feature>
<evidence type="ECO:0000255" key="1">
    <source>
        <dbReference type="HAMAP-Rule" id="MF_00108"/>
    </source>
</evidence>
<keyword id="KW-0414">Isoprene biosynthesis</keyword>
<keyword id="KW-0548">Nucleotidyltransferase</keyword>
<keyword id="KW-1185">Reference proteome</keyword>
<keyword id="KW-0808">Transferase</keyword>
<proteinExistence type="inferred from homology"/>
<organism>
    <name type="scientific">Clostridium novyi (strain NT)</name>
    <dbReference type="NCBI Taxonomy" id="386415"/>
    <lineage>
        <taxon>Bacteria</taxon>
        <taxon>Bacillati</taxon>
        <taxon>Bacillota</taxon>
        <taxon>Clostridia</taxon>
        <taxon>Eubacteriales</taxon>
        <taxon>Clostridiaceae</taxon>
        <taxon>Clostridium</taxon>
    </lineage>
</organism>
<dbReference type="EC" id="2.7.7.60" evidence="1"/>
<dbReference type="EMBL" id="CP000382">
    <property type="protein sequence ID" value="ABK60992.1"/>
    <property type="molecule type" value="Genomic_DNA"/>
</dbReference>
<dbReference type="RefSeq" id="WP_011721196.1">
    <property type="nucleotide sequence ID" value="NC_008593.1"/>
</dbReference>
<dbReference type="SMR" id="A0PXS4"/>
<dbReference type="STRING" id="386415.NT01CX_1092"/>
<dbReference type="KEGG" id="cno:NT01CX_1092"/>
<dbReference type="eggNOG" id="COG1211">
    <property type="taxonomic scope" value="Bacteria"/>
</dbReference>
<dbReference type="HOGENOM" id="CLU_061281_2_2_9"/>
<dbReference type="UniPathway" id="UPA00056">
    <property type="reaction ID" value="UER00093"/>
</dbReference>
<dbReference type="Proteomes" id="UP000008220">
    <property type="component" value="Chromosome"/>
</dbReference>
<dbReference type="GO" id="GO:0050518">
    <property type="term" value="F:2-C-methyl-D-erythritol 4-phosphate cytidylyltransferase activity"/>
    <property type="evidence" value="ECO:0007669"/>
    <property type="project" value="UniProtKB-UniRule"/>
</dbReference>
<dbReference type="GO" id="GO:0019288">
    <property type="term" value="P:isopentenyl diphosphate biosynthetic process, methylerythritol 4-phosphate pathway"/>
    <property type="evidence" value="ECO:0007669"/>
    <property type="project" value="UniProtKB-UniRule"/>
</dbReference>
<dbReference type="CDD" id="cd02516">
    <property type="entry name" value="CDP-ME_synthetase"/>
    <property type="match status" value="1"/>
</dbReference>
<dbReference type="FunFam" id="3.90.550.10:FF:000003">
    <property type="entry name" value="2-C-methyl-D-erythritol 4-phosphate cytidylyltransferase"/>
    <property type="match status" value="1"/>
</dbReference>
<dbReference type="Gene3D" id="3.90.550.10">
    <property type="entry name" value="Spore Coat Polysaccharide Biosynthesis Protein SpsA, Chain A"/>
    <property type="match status" value="1"/>
</dbReference>
<dbReference type="HAMAP" id="MF_00108">
    <property type="entry name" value="IspD"/>
    <property type="match status" value="1"/>
</dbReference>
<dbReference type="InterPro" id="IPR001228">
    <property type="entry name" value="IspD"/>
</dbReference>
<dbReference type="InterPro" id="IPR034683">
    <property type="entry name" value="IspD/TarI"/>
</dbReference>
<dbReference type="InterPro" id="IPR050088">
    <property type="entry name" value="IspD/TarI_cytidylyltransf_bact"/>
</dbReference>
<dbReference type="InterPro" id="IPR018294">
    <property type="entry name" value="ISPD_synthase_CS"/>
</dbReference>
<dbReference type="InterPro" id="IPR029044">
    <property type="entry name" value="Nucleotide-diphossugar_trans"/>
</dbReference>
<dbReference type="NCBIfam" id="TIGR00453">
    <property type="entry name" value="ispD"/>
    <property type="match status" value="1"/>
</dbReference>
<dbReference type="PANTHER" id="PTHR32125">
    <property type="entry name" value="2-C-METHYL-D-ERYTHRITOL 4-PHOSPHATE CYTIDYLYLTRANSFERASE, CHLOROPLASTIC"/>
    <property type="match status" value="1"/>
</dbReference>
<dbReference type="PANTHER" id="PTHR32125:SF4">
    <property type="entry name" value="2-C-METHYL-D-ERYTHRITOL 4-PHOSPHATE CYTIDYLYLTRANSFERASE, CHLOROPLASTIC"/>
    <property type="match status" value="1"/>
</dbReference>
<dbReference type="Pfam" id="PF01128">
    <property type="entry name" value="IspD"/>
    <property type="match status" value="1"/>
</dbReference>
<dbReference type="SUPFAM" id="SSF53448">
    <property type="entry name" value="Nucleotide-diphospho-sugar transferases"/>
    <property type="match status" value="1"/>
</dbReference>
<dbReference type="PROSITE" id="PS01295">
    <property type="entry name" value="ISPD"/>
    <property type="match status" value="1"/>
</dbReference>
<protein>
    <recommendedName>
        <fullName evidence="1">2-C-methyl-D-erythritol 4-phosphate cytidylyltransferase</fullName>
        <ecNumber evidence="1">2.7.7.60</ecNumber>
    </recommendedName>
    <alternativeName>
        <fullName evidence="1">4-diphosphocytidyl-2C-methyl-D-erythritol synthase</fullName>
    </alternativeName>
    <alternativeName>
        <fullName evidence="1">MEP cytidylyltransferase</fullName>
        <shortName evidence="1">MCT</shortName>
    </alternativeName>
</protein>
<gene>
    <name evidence="1" type="primary">ispD</name>
    <name type="ordered locus">NT01CX_1092</name>
</gene>
<name>ISPD_CLONN</name>